<dbReference type="EC" id="5.4.2.11" evidence="1"/>
<dbReference type="EMBL" id="AE014184">
    <property type="protein sequence ID" value="AAO44752.1"/>
    <property type="molecule type" value="Genomic_DNA"/>
</dbReference>
<dbReference type="RefSeq" id="WP_011096615.1">
    <property type="nucleotide sequence ID" value="NC_004572.3"/>
</dbReference>
<dbReference type="SMR" id="Q83FQ7"/>
<dbReference type="STRING" id="203267.TWT_655"/>
<dbReference type="KEGG" id="twh:TWT_655"/>
<dbReference type="eggNOG" id="COG0588">
    <property type="taxonomic scope" value="Bacteria"/>
</dbReference>
<dbReference type="HOGENOM" id="CLU_033323_1_1_11"/>
<dbReference type="OrthoDB" id="9781415at2"/>
<dbReference type="UniPathway" id="UPA00109">
    <property type="reaction ID" value="UER00186"/>
</dbReference>
<dbReference type="Proteomes" id="UP000002200">
    <property type="component" value="Chromosome"/>
</dbReference>
<dbReference type="GO" id="GO:0004619">
    <property type="term" value="F:phosphoglycerate mutase activity"/>
    <property type="evidence" value="ECO:0007669"/>
    <property type="project" value="UniProtKB-EC"/>
</dbReference>
<dbReference type="GO" id="GO:0006094">
    <property type="term" value="P:gluconeogenesis"/>
    <property type="evidence" value="ECO:0007669"/>
    <property type="project" value="UniProtKB-UniRule"/>
</dbReference>
<dbReference type="GO" id="GO:0006096">
    <property type="term" value="P:glycolytic process"/>
    <property type="evidence" value="ECO:0007669"/>
    <property type="project" value="UniProtKB-UniRule"/>
</dbReference>
<dbReference type="CDD" id="cd07067">
    <property type="entry name" value="HP_PGM_like"/>
    <property type="match status" value="1"/>
</dbReference>
<dbReference type="Gene3D" id="3.40.50.1240">
    <property type="entry name" value="Phosphoglycerate mutase-like"/>
    <property type="match status" value="1"/>
</dbReference>
<dbReference type="HAMAP" id="MF_01039">
    <property type="entry name" value="PGAM_GpmA"/>
    <property type="match status" value="1"/>
</dbReference>
<dbReference type="InterPro" id="IPR013078">
    <property type="entry name" value="His_Pase_superF_clade-1"/>
</dbReference>
<dbReference type="InterPro" id="IPR029033">
    <property type="entry name" value="His_PPase_superfam"/>
</dbReference>
<dbReference type="InterPro" id="IPR005952">
    <property type="entry name" value="Phosphogly_mut1"/>
</dbReference>
<dbReference type="NCBIfam" id="TIGR01258">
    <property type="entry name" value="pgm_1"/>
    <property type="match status" value="1"/>
</dbReference>
<dbReference type="PANTHER" id="PTHR11931">
    <property type="entry name" value="PHOSPHOGLYCERATE MUTASE"/>
    <property type="match status" value="1"/>
</dbReference>
<dbReference type="Pfam" id="PF00300">
    <property type="entry name" value="His_Phos_1"/>
    <property type="match status" value="1"/>
</dbReference>
<dbReference type="PIRSF" id="PIRSF000709">
    <property type="entry name" value="6PFK_2-Ptase"/>
    <property type="match status" value="1"/>
</dbReference>
<dbReference type="SMART" id="SM00855">
    <property type="entry name" value="PGAM"/>
    <property type="match status" value="1"/>
</dbReference>
<dbReference type="SUPFAM" id="SSF53254">
    <property type="entry name" value="Phosphoglycerate mutase-like"/>
    <property type="match status" value="1"/>
</dbReference>
<comment type="function">
    <text evidence="1">Catalyzes the interconversion of 2-phosphoglycerate and 3-phosphoglycerate.</text>
</comment>
<comment type="catalytic activity">
    <reaction evidence="1">
        <text>(2R)-2-phosphoglycerate = (2R)-3-phosphoglycerate</text>
        <dbReference type="Rhea" id="RHEA:15901"/>
        <dbReference type="ChEBI" id="CHEBI:58272"/>
        <dbReference type="ChEBI" id="CHEBI:58289"/>
        <dbReference type="EC" id="5.4.2.11"/>
    </reaction>
</comment>
<comment type="pathway">
    <text evidence="1">Carbohydrate degradation; glycolysis; pyruvate from D-glyceraldehyde 3-phosphate: step 3/5.</text>
</comment>
<comment type="similarity">
    <text evidence="1">Belongs to the phosphoglycerate mutase family. BPG-dependent PGAM subfamily.</text>
</comment>
<gene>
    <name evidence="1" type="primary">gpmA</name>
    <name type="synonym">gpm</name>
    <name type="ordered locus">TWT_655</name>
</gene>
<evidence type="ECO:0000255" key="1">
    <source>
        <dbReference type="HAMAP-Rule" id="MF_01039"/>
    </source>
</evidence>
<evidence type="ECO:0000256" key="2">
    <source>
        <dbReference type="SAM" id="MobiDB-lite"/>
    </source>
</evidence>
<proteinExistence type="inferred from homology"/>
<accession>Q83FQ7</accession>
<sequence>MDNLVLLRHGNSLWNQENLFTGWVDVRLSELGEKEAKTAGQLLREANRYPDVLFTSLLTRSIQTAHIALMEIDRVWLPTFRSWRLNERHYGSLQGKNKAQVLEEFGEEQFNSWRRGYDTPPPPLHSQADDPRYEEPPPLSESLKDVQNRLLPYWQGVILPHLVAGKVVLVVAHGNSLRALVKHLECISDTDVCQLNIPTGIPLVYSIDPSGCATHPGRYLP</sequence>
<reference key="1">
    <citation type="journal article" date="2003" name="Genome Res.">
        <title>Tropheryma whipplei twist: a human pathogenic Actinobacteria with a reduced genome.</title>
        <authorList>
            <person name="Raoult D."/>
            <person name="Ogata H."/>
            <person name="Audic S."/>
            <person name="Robert C."/>
            <person name="Suhre K."/>
            <person name="Drancourt M."/>
            <person name="Claverie J.-M."/>
        </authorList>
    </citation>
    <scope>NUCLEOTIDE SEQUENCE [LARGE SCALE GENOMIC DNA]</scope>
    <source>
        <strain>Twist</strain>
    </source>
</reference>
<feature type="chain" id="PRO_0000179936" description="2,3-bisphosphoglycerate-dependent phosphoglycerate mutase">
    <location>
        <begin position="1"/>
        <end position="221"/>
    </location>
</feature>
<feature type="region of interest" description="Disordered" evidence="2">
    <location>
        <begin position="114"/>
        <end position="140"/>
    </location>
</feature>
<feature type="active site" description="Tele-phosphohistidine intermediate" evidence="1">
    <location>
        <position position="9"/>
    </location>
</feature>
<feature type="active site" description="Proton donor/acceptor" evidence="1">
    <location>
        <position position="87"/>
    </location>
</feature>
<feature type="binding site" evidence="1">
    <location>
        <begin position="8"/>
        <end position="15"/>
    </location>
    <ligand>
        <name>substrate</name>
    </ligand>
</feature>
<feature type="binding site" evidence="1">
    <location>
        <begin position="21"/>
        <end position="22"/>
    </location>
    <ligand>
        <name>substrate</name>
    </ligand>
</feature>
<feature type="binding site" evidence="1">
    <location>
        <position position="60"/>
    </location>
    <ligand>
        <name>substrate</name>
    </ligand>
</feature>
<feature type="binding site" evidence="1">
    <location>
        <begin position="87"/>
        <end position="90"/>
    </location>
    <ligand>
        <name>substrate</name>
    </ligand>
</feature>
<feature type="binding site" evidence="1">
    <location>
        <position position="98"/>
    </location>
    <ligand>
        <name>substrate</name>
    </ligand>
</feature>
<feature type="binding site" evidence="1">
    <location>
        <begin position="114"/>
        <end position="115"/>
    </location>
    <ligand>
        <name>substrate</name>
    </ligand>
</feature>
<feature type="binding site" evidence="1">
    <location>
        <begin position="174"/>
        <end position="175"/>
    </location>
    <ligand>
        <name>substrate</name>
    </ligand>
</feature>
<feature type="site" description="Transition state stabilizer" evidence="1">
    <location>
        <position position="173"/>
    </location>
</feature>
<keyword id="KW-0312">Gluconeogenesis</keyword>
<keyword id="KW-0324">Glycolysis</keyword>
<keyword id="KW-0413">Isomerase</keyword>
<keyword id="KW-1185">Reference proteome</keyword>
<name>GPMA_TROWT</name>
<organism>
    <name type="scientific">Tropheryma whipplei (strain Twist)</name>
    <name type="common">Whipple's bacillus</name>
    <dbReference type="NCBI Taxonomy" id="203267"/>
    <lineage>
        <taxon>Bacteria</taxon>
        <taxon>Bacillati</taxon>
        <taxon>Actinomycetota</taxon>
        <taxon>Actinomycetes</taxon>
        <taxon>Micrococcales</taxon>
        <taxon>Tropherymataceae</taxon>
        <taxon>Tropheryma</taxon>
    </lineage>
</organism>
<protein>
    <recommendedName>
        <fullName evidence="1">2,3-bisphosphoglycerate-dependent phosphoglycerate mutase</fullName>
        <shortName evidence="1">BPG-dependent PGAM</shortName>
        <shortName evidence="1">PGAM</shortName>
        <shortName evidence="1">Phosphoglyceromutase</shortName>
        <shortName evidence="1">dPGM</shortName>
        <ecNumber evidence="1">5.4.2.11</ecNumber>
    </recommendedName>
</protein>